<gene>
    <name evidence="1" type="primary">rpmI</name>
    <name evidence="1" type="synonym">rpl35</name>
    <name type="ordered locus">spyM18_0867</name>
</gene>
<sequence>MPKQKTHRASAKRFKRTGSGGLKRFRAFTSHRFHGKTKKQRRHLRKADLVSSGDFKRIKAMVTGL</sequence>
<evidence type="ECO:0000255" key="1">
    <source>
        <dbReference type="HAMAP-Rule" id="MF_00514"/>
    </source>
</evidence>
<evidence type="ECO:0000256" key="2">
    <source>
        <dbReference type="SAM" id="MobiDB-lite"/>
    </source>
</evidence>
<evidence type="ECO:0000305" key="3"/>
<proteinExistence type="inferred from homology"/>
<comment type="similarity">
    <text evidence="1">Belongs to the bacterial ribosomal protein bL35 family.</text>
</comment>
<reference key="1">
    <citation type="journal article" date="2002" name="Proc. Natl. Acad. Sci. U.S.A.">
        <title>Genome sequence and comparative microarray analysis of serotype M18 group A Streptococcus strains associated with acute rheumatic fever outbreaks.</title>
        <authorList>
            <person name="Smoot J.C."/>
            <person name="Barbian K.D."/>
            <person name="Van Gompel J.J."/>
            <person name="Smoot L.M."/>
            <person name="Chaussee M.S."/>
            <person name="Sylva G.L."/>
            <person name="Sturdevant D.E."/>
            <person name="Ricklefs S.M."/>
            <person name="Porcella S.F."/>
            <person name="Parkins L.D."/>
            <person name="Beres S.B."/>
            <person name="Campbell D.S."/>
            <person name="Smith T.M."/>
            <person name="Zhang Q."/>
            <person name="Kapur V."/>
            <person name="Daly J.A."/>
            <person name="Veasy L.G."/>
            <person name="Musser J.M."/>
        </authorList>
    </citation>
    <scope>NUCLEOTIDE SEQUENCE [LARGE SCALE GENOMIC DNA]</scope>
    <source>
        <strain>MGAS8232</strain>
    </source>
</reference>
<name>RL35_STRP8</name>
<feature type="chain" id="PRO_0000177437" description="Large ribosomal subunit protein bL35">
    <location>
        <begin position="1"/>
        <end position="65"/>
    </location>
</feature>
<feature type="region of interest" description="Disordered" evidence="2">
    <location>
        <begin position="1"/>
        <end position="21"/>
    </location>
</feature>
<feature type="compositionally biased region" description="Basic residues" evidence="2">
    <location>
        <begin position="1"/>
        <end position="16"/>
    </location>
</feature>
<keyword id="KW-0687">Ribonucleoprotein</keyword>
<keyword id="KW-0689">Ribosomal protein</keyword>
<accession>Q8P1H7</accession>
<protein>
    <recommendedName>
        <fullName evidence="1">Large ribosomal subunit protein bL35</fullName>
    </recommendedName>
    <alternativeName>
        <fullName evidence="3">50S ribosomal protein L35</fullName>
    </alternativeName>
</protein>
<dbReference type="EMBL" id="AE009949">
    <property type="protein sequence ID" value="AAL97521.1"/>
    <property type="molecule type" value="Genomic_DNA"/>
</dbReference>
<dbReference type="RefSeq" id="WP_011017637.1">
    <property type="nucleotide sequence ID" value="NC_003485.1"/>
</dbReference>
<dbReference type="SMR" id="Q8P1H7"/>
<dbReference type="KEGG" id="spm:spyM18_0867"/>
<dbReference type="HOGENOM" id="CLU_169643_3_1_9"/>
<dbReference type="GO" id="GO:0022625">
    <property type="term" value="C:cytosolic large ribosomal subunit"/>
    <property type="evidence" value="ECO:0007669"/>
    <property type="project" value="TreeGrafter"/>
</dbReference>
<dbReference type="GO" id="GO:0003735">
    <property type="term" value="F:structural constituent of ribosome"/>
    <property type="evidence" value="ECO:0007669"/>
    <property type="project" value="InterPro"/>
</dbReference>
<dbReference type="GO" id="GO:0006412">
    <property type="term" value="P:translation"/>
    <property type="evidence" value="ECO:0007669"/>
    <property type="project" value="UniProtKB-UniRule"/>
</dbReference>
<dbReference type="FunFam" id="4.10.410.60:FF:000001">
    <property type="entry name" value="50S ribosomal protein L35"/>
    <property type="match status" value="1"/>
</dbReference>
<dbReference type="Gene3D" id="4.10.410.60">
    <property type="match status" value="1"/>
</dbReference>
<dbReference type="HAMAP" id="MF_00514">
    <property type="entry name" value="Ribosomal_bL35"/>
    <property type="match status" value="1"/>
</dbReference>
<dbReference type="InterPro" id="IPR001706">
    <property type="entry name" value="Ribosomal_bL35"/>
</dbReference>
<dbReference type="InterPro" id="IPR021137">
    <property type="entry name" value="Ribosomal_bL35-like"/>
</dbReference>
<dbReference type="InterPro" id="IPR018265">
    <property type="entry name" value="Ribosomal_bL35_CS"/>
</dbReference>
<dbReference type="InterPro" id="IPR037229">
    <property type="entry name" value="Ribosomal_bL35_sf"/>
</dbReference>
<dbReference type="NCBIfam" id="TIGR00001">
    <property type="entry name" value="rpmI_bact"/>
    <property type="match status" value="1"/>
</dbReference>
<dbReference type="PANTHER" id="PTHR33343">
    <property type="entry name" value="54S RIBOSOMAL PROTEIN BL35M"/>
    <property type="match status" value="1"/>
</dbReference>
<dbReference type="PANTHER" id="PTHR33343:SF1">
    <property type="entry name" value="LARGE RIBOSOMAL SUBUNIT PROTEIN BL35M"/>
    <property type="match status" value="1"/>
</dbReference>
<dbReference type="Pfam" id="PF01632">
    <property type="entry name" value="Ribosomal_L35p"/>
    <property type="match status" value="1"/>
</dbReference>
<dbReference type="PRINTS" id="PR00064">
    <property type="entry name" value="RIBOSOMALL35"/>
</dbReference>
<dbReference type="SUPFAM" id="SSF143034">
    <property type="entry name" value="L35p-like"/>
    <property type="match status" value="1"/>
</dbReference>
<dbReference type="PROSITE" id="PS00936">
    <property type="entry name" value="RIBOSOMAL_L35"/>
    <property type="match status" value="1"/>
</dbReference>
<organism>
    <name type="scientific">Streptococcus pyogenes serotype M18 (strain MGAS8232)</name>
    <dbReference type="NCBI Taxonomy" id="186103"/>
    <lineage>
        <taxon>Bacteria</taxon>
        <taxon>Bacillati</taxon>
        <taxon>Bacillota</taxon>
        <taxon>Bacilli</taxon>
        <taxon>Lactobacillales</taxon>
        <taxon>Streptococcaceae</taxon>
        <taxon>Streptococcus</taxon>
    </lineage>
</organism>